<sequence>MSIVGLVSVVCPSGGIKKRYFSKGLDNFQGFRSSECLGIQLQVPVPFYSGIRQSPRATSLQVVCKDCPRPELEGAVNFLEAAQLSASFRSSPRPEKGLEVVVVGAGLAGLSTAKYLADAGHKPILLESRDVLGGKIAAWKDKDGDWYETGLHIFFGAYPNVQNLFGELGINDRLQWKEHSMIFAMPNKPGEFSRFDFPEVLPAPLNGIWAILRNNEMLTWPEKVRFAIGLLPAMVGGQAYVEAQDGLTVTEWMRRQGVPDRVNDEVFIAMSKALNFINPDELSMQCILIALNRFLQEKHGSKMAFLDGNPPERLCMPIVDHIQSLGGRAQLNSRLQKIELNPDGTVKHFVLGNGNIITGDAYVVAAPVDILKLLLPQEWREIPYFQKLDKLVGVPVINVHIWFDRKLKNTYDHLLFTRSPLLSVYADMSVTCKEYYDPNRSMLELVFAPAEEWISRSDSEIIERTMKELAKLFPDEIAADQSKAKILKYHVVKTPRSVYKTIPDCEPCRPLQRSPIEGFYLAGDYTNQKYLASMEGAVLSGKLCAQSIVQDYELLVRRSKKASTAEMTVV</sequence>
<keyword id="KW-0125">Carotenoid biosynthesis</keyword>
<keyword id="KW-0150">Chloroplast</keyword>
<keyword id="KW-0957">Chromoplast</keyword>
<keyword id="KW-0274">FAD</keyword>
<keyword id="KW-0285">Flavoprotein</keyword>
<keyword id="KW-0472">Membrane</keyword>
<keyword id="KW-0560">Oxidoreductase</keyword>
<keyword id="KW-0934">Plastid</keyword>
<keyword id="KW-0809">Transit peptide</keyword>
<comment type="function">
    <text evidence="4 5">Converts phytoene into zeta-carotene via the intermediary of phytofluene by the symmetrical introduction of two double bonds at the C-11 and C-11' positions of phytoene with a concomitant isomerization of two neighboring double bonds at the C9 and C9' positions from trans to cis.</text>
</comment>
<comment type="catalytic activity">
    <reaction evidence="4 5">
        <text>2 a plastoquinone + 15-cis-phytoene = 9,9',15-tri-cis-zeta-carotene + 2 a plastoquinol</text>
        <dbReference type="Rhea" id="RHEA:30287"/>
        <dbReference type="Rhea" id="RHEA-COMP:9561"/>
        <dbReference type="Rhea" id="RHEA-COMP:9562"/>
        <dbReference type="ChEBI" id="CHEBI:17757"/>
        <dbReference type="ChEBI" id="CHEBI:27787"/>
        <dbReference type="ChEBI" id="CHEBI:48717"/>
        <dbReference type="ChEBI" id="CHEBI:62192"/>
        <dbReference type="EC" id="1.3.5.5"/>
    </reaction>
</comment>
<comment type="cofactor">
    <cofactor evidence="5">
        <name>FAD</name>
        <dbReference type="ChEBI" id="CHEBI:57692"/>
    </cofactor>
</comment>
<comment type="pathway">
    <text>Carotenoid biosynthesis; lycopene biosynthesis.</text>
</comment>
<comment type="subunit">
    <text evidence="2">Homotetramer.</text>
</comment>
<comment type="subcellular location">
    <subcellularLocation>
        <location evidence="6">Plastid</location>
        <location evidence="6">Chloroplast</location>
    </subcellularLocation>
    <subcellularLocation>
        <location evidence="4 5 6">Plastid</location>
        <location evidence="4 5 6">Chromoplast</location>
    </subcellularLocation>
    <subcellularLocation>
        <location evidence="5 6">Membrane</location>
        <topology evidence="2">Peripheral membrane protein</topology>
    </subcellularLocation>
    <text evidence="5">Exists as an inactive soluble form and an active membrane-bound form.</text>
</comment>
<comment type="tissue specificity">
    <text evidence="5">Expressed more strongly in flowers than in leaves.</text>
</comment>
<comment type="developmental stage">
    <text evidence="5">Expression increases during flower development.</text>
</comment>
<comment type="similarity">
    <text evidence="8">Belongs to the carotenoid/retinoid oxidoreductase family.</text>
</comment>
<dbReference type="EC" id="1.3.5.5" evidence="4 5"/>
<dbReference type="EMBL" id="X78815">
    <property type="protein sequence ID" value="CAA55392.1"/>
    <property type="molecule type" value="mRNA"/>
</dbReference>
<dbReference type="PIR" id="S54134">
    <property type="entry name" value="S54134"/>
</dbReference>
<dbReference type="SMR" id="Q40406"/>
<dbReference type="UniPathway" id="UPA00803"/>
<dbReference type="GO" id="GO:0009507">
    <property type="term" value="C:chloroplast"/>
    <property type="evidence" value="ECO:0000314"/>
    <property type="project" value="UniProtKB"/>
</dbReference>
<dbReference type="GO" id="GO:0009534">
    <property type="term" value="C:chloroplast thylakoid"/>
    <property type="evidence" value="ECO:0007669"/>
    <property type="project" value="TreeGrafter"/>
</dbReference>
<dbReference type="GO" id="GO:0009509">
    <property type="term" value="C:chromoplast"/>
    <property type="evidence" value="ECO:0000314"/>
    <property type="project" value="UniProtKB"/>
</dbReference>
<dbReference type="GO" id="GO:0016020">
    <property type="term" value="C:membrane"/>
    <property type="evidence" value="ECO:0007669"/>
    <property type="project" value="UniProtKB-SubCell"/>
</dbReference>
<dbReference type="GO" id="GO:0016166">
    <property type="term" value="F:phytoene dehydrogenase activity"/>
    <property type="evidence" value="ECO:0000314"/>
    <property type="project" value="UniProtKB"/>
</dbReference>
<dbReference type="GO" id="GO:0016117">
    <property type="term" value="P:carotenoid biosynthetic process"/>
    <property type="evidence" value="ECO:0000314"/>
    <property type="project" value="UniProtKB"/>
</dbReference>
<dbReference type="FunFam" id="3.50.50.60:FF:000091">
    <property type="entry name" value="15-cis-phytoene desaturase, chloroplastic/chromoplastic"/>
    <property type="match status" value="1"/>
</dbReference>
<dbReference type="Gene3D" id="3.50.50.60">
    <property type="entry name" value="FAD/NAD(P)-binding domain"/>
    <property type="match status" value="1"/>
</dbReference>
<dbReference type="InterPro" id="IPR002937">
    <property type="entry name" value="Amino_oxidase"/>
</dbReference>
<dbReference type="InterPro" id="IPR036188">
    <property type="entry name" value="FAD/NAD-bd_sf"/>
</dbReference>
<dbReference type="InterPro" id="IPR001613">
    <property type="entry name" value="Flavin_amine_oxidase"/>
</dbReference>
<dbReference type="InterPro" id="IPR014102">
    <property type="entry name" value="Phytoene_desaturase"/>
</dbReference>
<dbReference type="InterPro" id="IPR050464">
    <property type="entry name" value="Zeta_carotene_desat/Oxidored"/>
</dbReference>
<dbReference type="NCBIfam" id="TIGR02731">
    <property type="entry name" value="phytoene_desat"/>
    <property type="match status" value="1"/>
</dbReference>
<dbReference type="PANTHER" id="PTHR42923:SF45">
    <property type="entry name" value="15-CIS-PHYTOENE DESATURASE, CHLOROPLASTIC_CHROMOPLASTIC"/>
    <property type="match status" value="1"/>
</dbReference>
<dbReference type="PANTHER" id="PTHR42923">
    <property type="entry name" value="PROTOPORPHYRINOGEN OXIDASE"/>
    <property type="match status" value="1"/>
</dbReference>
<dbReference type="Pfam" id="PF01593">
    <property type="entry name" value="Amino_oxidase"/>
    <property type="match status" value="1"/>
</dbReference>
<dbReference type="PRINTS" id="PR00757">
    <property type="entry name" value="AMINEOXDASEF"/>
</dbReference>
<dbReference type="SUPFAM" id="SSF51905">
    <property type="entry name" value="FAD/NAD(P)-binding domain"/>
    <property type="match status" value="1"/>
</dbReference>
<name>PDS_NARPS</name>
<gene>
    <name type="primary">PDS1</name>
    <name type="synonym">PDS</name>
</gene>
<evidence type="ECO:0000250" key="1"/>
<evidence type="ECO:0000250" key="2">
    <source>
        <dbReference type="UniProtKB" id="A2XDA1"/>
    </source>
</evidence>
<evidence type="ECO:0000255" key="3"/>
<evidence type="ECO:0000269" key="4">
    <source>
    </source>
</evidence>
<evidence type="ECO:0000269" key="5">
    <source>
    </source>
</evidence>
<evidence type="ECO:0000269" key="6">
    <source>
    </source>
</evidence>
<evidence type="ECO:0000303" key="7">
    <source ref="1"/>
</evidence>
<evidence type="ECO:0000305" key="8"/>
<protein>
    <recommendedName>
        <fullName evidence="8">15-cis-phytoene desaturase, chloroplastic/chromoplastic</fullName>
        <ecNumber evidence="4 5">1.3.5.5</ecNumber>
    </recommendedName>
    <alternativeName>
        <fullName evidence="8">Phytoene dehydrogenase</fullName>
    </alternativeName>
    <alternativeName>
        <fullName evidence="7">Phytoene desaturase</fullName>
    </alternativeName>
</protein>
<feature type="transit peptide" description="Chloroplast and chromoplast" evidence="3">
    <location>
        <begin position="1"/>
        <end position="91"/>
    </location>
</feature>
<feature type="chain" id="PRO_0000006326" description="15-cis-phytoene desaturase, chloroplastic/chromoplastic">
    <location>
        <begin position="92"/>
        <end position="570"/>
    </location>
</feature>
<feature type="binding site" evidence="1">
    <location>
        <begin position="104"/>
        <end position="120"/>
    </location>
    <ligand>
        <name>FAD</name>
        <dbReference type="ChEBI" id="CHEBI:57692"/>
    </ligand>
</feature>
<feature type="binding site" evidence="2">
    <location>
        <position position="108"/>
    </location>
    <ligand>
        <name>FAD</name>
        <dbReference type="ChEBI" id="CHEBI:57692"/>
    </ligand>
</feature>
<feature type="binding site" evidence="2">
    <location>
        <begin position="127"/>
        <end position="128"/>
    </location>
    <ligand>
        <name>FAD</name>
        <dbReference type="ChEBI" id="CHEBI:57692"/>
    </ligand>
</feature>
<feature type="binding site" evidence="2">
    <location>
        <position position="135"/>
    </location>
    <ligand>
        <name>FAD</name>
        <dbReference type="ChEBI" id="CHEBI:57692"/>
    </ligand>
</feature>
<feature type="binding site" evidence="2">
    <location>
        <begin position="152"/>
        <end position="153"/>
    </location>
    <ligand>
        <name>FAD</name>
        <dbReference type="ChEBI" id="CHEBI:57692"/>
    </ligand>
</feature>
<feature type="binding site" evidence="2">
    <location>
        <position position="158"/>
    </location>
    <ligand>
        <name>FAD</name>
        <dbReference type="ChEBI" id="CHEBI:57692"/>
    </ligand>
</feature>
<feature type="binding site" evidence="2">
    <location>
        <position position="293"/>
    </location>
    <ligand>
        <name>substrate</name>
    </ligand>
</feature>
<feature type="binding site" evidence="2">
    <location>
        <position position="524"/>
    </location>
    <ligand>
        <name>FAD</name>
        <dbReference type="ChEBI" id="CHEBI:57692"/>
    </ligand>
</feature>
<feature type="binding site" evidence="2">
    <location>
        <position position="532"/>
    </location>
    <ligand>
        <name>substrate</name>
    </ligand>
</feature>
<feature type="binding site" evidence="2">
    <location>
        <position position="534"/>
    </location>
    <ligand>
        <name>FAD</name>
        <dbReference type="ChEBI" id="CHEBI:57692"/>
    </ligand>
</feature>
<organism>
    <name type="scientific">Narcissus pseudonarcissus</name>
    <name type="common">Daffodil</name>
    <dbReference type="NCBI Taxonomy" id="39639"/>
    <lineage>
        <taxon>Eukaryota</taxon>
        <taxon>Viridiplantae</taxon>
        <taxon>Streptophyta</taxon>
        <taxon>Embryophyta</taxon>
        <taxon>Tracheophyta</taxon>
        <taxon>Spermatophyta</taxon>
        <taxon>Magnoliopsida</taxon>
        <taxon>Liliopsida</taxon>
        <taxon>Asparagales</taxon>
        <taxon>Amaryllidaceae</taxon>
        <taxon>Amaryllidoideae</taxon>
        <taxon>Narcissus</taxon>
    </lineage>
</organism>
<proteinExistence type="evidence at protein level"/>
<accession>Q40406</accession>
<reference key="1">
    <citation type="online journal article" date="1995" name="Plant Gene Register">
        <title>A cDNA encoding phytoene desaturase from daffodil.</title>
        <authorList>
            <person name="Al-Babili S."/>
            <person name="Beyer P."/>
        </authorList>
        <locator>PGR95-131</locator>
    </citation>
    <scope>NUCLEOTIDE SEQUENCE [MRNA]</scope>
    <source>
        <tissue>Paracorolla</tissue>
    </source>
</reference>
<reference key="2">
    <citation type="journal article" date="1996" name="Plant J.">
        <title>A novel, soluble form of phytoene desaturase from Narcissus pseudonarcissus chromoplasts is Hsp70-complexed and competent for flavinylation, membrane association and enzymatic activation.</title>
        <authorList>
            <person name="Al-Babili S."/>
            <person name="von Lintig J."/>
            <person name="Haubruck H."/>
            <person name="Beyer P."/>
        </authorList>
    </citation>
    <scope>NUCLEOTIDE SEQUENCE [MRNA]</scope>
    <scope>FUNCTION</scope>
    <scope>CATALYTIC ACTIVITY</scope>
    <scope>COFACTOR</scope>
    <scope>SUBCELLULAR LOCATION</scope>
    <scope>TISSUE SPECIFICITY</scope>
    <scope>DEVELOPMENTAL STAGE</scope>
    <source>
        <tissue>Paracorolla</tissue>
    </source>
</reference>
<reference key="3">
    <citation type="journal article" date="1997" name="Eur. J. Biochem.">
        <title>Chloroplast import of four carotenoid biosynthetic enzymes in vitro reveals differential fates prior to membrane binding and oligomeric assembly.</title>
        <authorList>
            <person name="Bonk M."/>
            <person name="Hoffmann B."/>
            <person name="von Lintig J."/>
            <person name="Schledz M."/>
            <person name="Al-Babili S."/>
            <person name="Hobeika E."/>
            <person name="Kleinig H."/>
            <person name="Beyer P."/>
        </authorList>
    </citation>
    <scope>SUBCELLULAR LOCATION</scope>
</reference>
<reference key="4">
    <citation type="journal article" date="2017" name="PLoS ONE">
        <title>Plant-type phytoene desaturase: Functional evaluation of structural implications.</title>
        <authorList>
            <person name="Koschmieder J."/>
            <person name="Fehling-Kaschek M."/>
            <person name="Schaub P."/>
            <person name="Ghisla S."/>
            <person name="Brausemann A."/>
            <person name="Timmer J."/>
            <person name="Beyer P."/>
        </authorList>
    </citation>
    <scope>FUNCTION</scope>
    <scope>CATALYTIC ACTIVITY</scope>
    <scope>SUBCELLULAR LOCATION</scope>
</reference>